<sequence>MEIKDLQCNIFIPDPLSIKHMKIALVRDLTNNSFGRQATLLEKGLKELGHEVTSFEKNSIRKEDLPPGFDDYIYYTIFNTQLFWKGIPKHGKNIVFEVADTDAISSVALYFFRHQPVDKIIVPSQWSKNAFYTLKLPIPQPIYVIPHALNPSMFSYPPKEMPHPCVLAILPHSWDRKGGDIVVNVFRELMNSGYHFYPLILVSNMLEPRLRGLNAVKTPLPDPDYYSLFAGCDILFYPVRGGAFEIPVIEALALGLDVVVTEKGAWSEWILNNDDVYWIKVNKKVKLWYTNLFHVGYFLEPDYNDAYQKLVMALANWHPEKKKENLENRAILYRERYNYINIAKEWEKILA</sequence>
<organism>
    <name type="scientific">Sulfolobus islandicus filamentous virus (isolate Iceland/Hveragerdi)</name>
    <name type="common">SIFV</name>
    <dbReference type="NCBI Taxonomy" id="654908"/>
    <lineage>
        <taxon>Viruses</taxon>
        <taxon>Adnaviria</taxon>
        <taxon>Zilligvirae</taxon>
        <taxon>Taleaviricota</taxon>
        <taxon>Tokiviricetes</taxon>
        <taxon>Ligamenvirales</taxon>
        <taxon>Lipothrixviridae</taxon>
        <taxon>Betalipothrixvirus</taxon>
        <taxon>Sulfolobus islandicus filamentous virus</taxon>
    </lineage>
</organism>
<keyword id="KW-0328">Glycosyltransferase</keyword>
<keyword id="KW-1185">Reference proteome</keyword>
<keyword id="KW-0808">Transferase</keyword>
<protein>
    <recommendedName>
        <fullName>Putative glycosyltransferase 45</fullName>
        <ecNumber>2.4.-.-</ecNumber>
    </recommendedName>
</protein>
<reference key="1">
    <citation type="journal article" date="2000" name="Virology">
        <title>A novel lipothrixvirus, SIFV, of the extremely thermophilic crenarchaeon Sulfolobus.</title>
        <authorList>
            <person name="Arnold H.P."/>
            <person name="Zillig W."/>
            <person name="Ziese U."/>
            <person name="Holz I."/>
            <person name="Crosby M."/>
            <person name="Utterback T."/>
            <person name="Weidmann J.F."/>
            <person name="Umayam L.A."/>
            <person name="Teffera K."/>
            <person name="Kristjanson J.K."/>
            <person name="Klenk H.P."/>
            <person name="Nelson K.E."/>
            <person name="Fraser C.M."/>
        </authorList>
    </citation>
    <scope>NUCLEOTIDE SEQUENCE [GENOMIC DNA]</scope>
</reference>
<feature type="chain" id="PRO_0000385380" description="Putative glycosyltransferase 45">
    <location>
        <begin position="1"/>
        <end position="351"/>
    </location>
</feature>
<accession>Q914I7</accession>
<proteinExistence type="inferred from homology"/>
<organismHost>
    <name type="scientific">Saccharolobus islandicus</name>
    <name type="common">Sulfolobus islandicus</name>
    <dbReference type="NCBI Taxonomy" id="43080"/>
</organismHost>
<gene>
    <name type="primary">SIFV0045</name>
</gene>
<dbReference type="EC" id="2.4.-.-"/>
<dbReference type="EMBL" id="AF440571">
    <property type="protein sequence ID" value="AAL27754.1"/>
    <property type="molecule type" value="Genomic_DNA"/>
</dbReference>
<dbReference type="RefSeq" id="NP_445708.1">
    <property type="nucleotide sequence ID" value="NC_003214.2"/>
</dbReference>
<dbReference type="SMR" id="Q914I7"/>
<dbReference type="GeneID" id="922291"/>
<dbReference type="KEGG" id="vg:922291"/>
<dbReference type="Proteomes" id="UP000007017">
    <property type="component" value="Segment"/>
</dbReference>
<dbReference type="GO" id="GO:0016757">
    <property type="term" value="F:glycosyltransferase activity"/>
    <property type="evidence" value="ECO:0007669"/>
    <property type="project" value="UniProtKB-KW"/>
</dbReference>
<dbReference type="Gene3D" id="3.40.50.2000">
    <property type="entry name" value="Glycogen Phosphorylase B"/>
    <property type="match status" value="1"/>
</dbReference>
<dbReference type="SUPFAM" id="SSF53756">
    <property type="entry name" value="UDP-Glycosyltransferase/glycogen phosphorylase"/>
    <property type="match status" value="1"/>
</dbReference>
<comment type="similarity">
    <text evidence="1">Belongs to the glycosyltransferase group 1 family.</text>
</comment>
<name>GT045_SIFVH</name>
<evidence type="ECO:0000305" key="1"/>